<sequence length="429" mass="47373">MPNQDILDLQPAHIRELQNRYERAMADHGYDSLLIASGAAPYRYRDDQAYVFQGFGPFLHWTGLAGQEHSWLLVRPGQKPVLWLYQPVDFWHANPVMAEEPWLEVVDVRSRQQSGAPELDSPGRLVVIGDPLVLDGVPGDHNPAALVAAVEEARVRKTPYEIECLAHANRIALAGHRAAREAFLAGDSEFGINLAYQQATGQREVEAPYHSIIGLNEHAGTLHYQYYDLKPPRRPRSLLIDAGVRYRGYCSDITRTTAGPDEPRFTALVHGLEKLQLRLCEMVSPGVDYVDIHRKAHLGIATLLSASGLVSGLADEAMVEQGITRAFFPHGIGHFLGIQVHDVAGKPTPSPEDAPFLRLTRTLEAGMVVTIEPGLYFIPSLLEPLLNGPEAQYLNRALIDELKSCGGIRIEDNVVVTAAGARNLTRECE</sequence>
<proteinExistence type="inferred from homology"/>
<organism>
    <name type="scientific">Marinobacter nauticus (strain ATCC 700491 / DSM 11845 / VT8)</name>
    <name type="common">Marinobacter aquaeolei</name>
    <dbReference type="NCBI Taxonomy" id="351348"/>
    <lineage>
        <taxon>Bacteria</taxon>
        <taxon>Pseudomonadati</taxon>
        <taxon>Pseudomonadota</taxon>
        <taxon>Gammaproteobacteria</taxon>
        <taxon>Pseudomonadales</taxon>
        <taxon>Marinobacteraceae</taxon>
        <taxon>Marinobacter</taxon>
    </lineage>
</organism>
<accession>A1TXT7</accession>
<comment type="function">
    <text evidence="1">Splits dipeptides with a prolyl residue in the C-terminal position.</text>
</comment>
<comment type="catalytic activity">
    <reaction evidence="1">
        <text>Xaa-L-Pro dipeptide + H2O = an L-alpha-amino acid + L-proline</text>
        <dbReference type="Rhea" id="RHEA:76407"/>
        <dbReference type="ChEBI" id="CHEBI:15377"/>
        <dbReference type="ChEBI" id="CHEBI:59869"/>
        <dbReference type="ChEBI" id="CHEBI:60039"/>
        <dbReference type="ChEBI" id="CHEBI:195196"/>
        <dbReference type="EC" id="3.4.13.9"/>
    </reaction>
</comment>
<comment type="cofactor">
    <cofactor evidence="1">
        <name>Mn(2+)</name>
        <dbReference type="ChEBI" id="CHEBI:29035"/>
    </cofactor>
    <text evidence="1">Binds 2 manganese ions per subunit.</text>
</comment>
<comment type="similarity">
    <text evidence="1">Belongs to the peptidase M24B family. Bacterial-type prolidase subfamily.</text>
</comment>
<name>PEPQ_MARN8</name>
<dbReference type="EC" id="3.4.13.9" evidence="1"/>
<dbReference type="EMBL" id="CP000514">
    <property type="protein sequence ID" value="ABM17556.1"/>
    <property type="molecule type" value="Genomic_DNA"/>
</dbReference>
<dbReference type="RefSeq" id="WP_011784000.1">
    <property type="nucleotide sequence ID" value="NC_008740.1"/>
</dbReference>
<dbReference type="SMR" id="A1TXT7"/>
<dbReference type="STRING" id="351348.Maqu_0455"/>
<dbReference type="KEGG" id="maq:Maqu_0455"/>
<dbReference type="eggNOG" id="COG0006">
    <property type="taxonomic scope" value="Bacteria"/>
</dbReference>
<dbReference type="HOGENOM" id="CLU_050675_0_0_6"/>
<dbReference type="OrthoDB" id="9806388at2"/>
<dbReference type="Proteomes" id="UP000000998">
    <property type="component" value="Chromosome"/>
</dbReference>
<dbReference type="GO" id="GO:0005829">
    <property type="term" value="C:cytosol"/>
    <property type="evidence" value="ECO:0007669"/>
    <property type="project" value="TreeGrafter"/>
</dbReference>
<dbReference type="GO" id="GO:0004177">
    <property type="term" value="F:aminopeptidase activity"/>
    <property type="evidence" value="ECO:0007669"/>
    <property type="project" value="TreeGrafter"/>
</dbReference>
<dbReference type="GO" id="GO:0046872">
    <property type="term" value="F:metal ion binding"/>
    <property type="evidence" value="ECO:0007669"/>
    <property type="project" value="UniProtKB-KW"/>
</dbReference>
<dbReference type="GO" id="GO:0008235">
    <property type="term" value="F:metalloexopeptidase activity"/>
    <property type="evidence" value="ECO:0007669"/>
    <property type="project" value="UniProtKB-UniRule"/>
</dbReference>
<dbReference type="GO" id="GO:0016795">
    <property type="term" value="F:phosphoric triester hydrolase activity"/>
    <property type="evidence" value="ECO:0007669"/>
    <property type="project" value="InterPro"/>
</dbReference>
<dbReference type="GO" id="GO:0102009">
    <property type="term" value="F:proline dipeptidase activity"/>
    <property type="evidence" value="ECO:0007669"/>
    <property type="project" value="UniProtKB-EC"/>
</dbReference>
<dbReference type="GO" id="GO:0006508">
    <property type="term" value="P:proteolysis"/>
    <property type="evidence" value="ECO:0007669"/>
    <property type="project" value="UniProtKB-KW"/>
</dbReference>
<dbReference type="Gene3D" id="3.90.230.10">
    <property type="entry name" value="Creatinase/methionine aminopeptidase superfamily"/>
    <property type="match status" value="1"/>
</dbReference>
<dbReference type="Gene3D" id="3.40.350.10">
    <property type="entry name" value="Creatinase/prolidase N-terminal domain"/>
    <property type="match status" value="1"/>
</dbReference>
<dbReference type="HAMAP" id="MF_01279">
    <property type="entry name" value="X_Pro_dipeptid"/>
    <property type="match status" value="1"/>
</dbReference>
<dbReference type="InterPro" id="IPR029149">
    <property type="entry name" value="Creatin/AminoP/Spt16_N"/>
</dbReference>
<dbReference type="InterPro" id="IPR036005">
    <property type="entry name" value="Creatinase/aminopeptidase-like"/>
</dbReference>
<dbReference type="InterPro" id="IPR048819">
    <property type="entry name" value="PepQ_N"/>
</dbReference>
<dbReference type="InterPro" id="IPR000994">
    <property type="entry name" value="Pept_M24"/>
</dbReference>
<dbReference type="InterPro" id="IPR001131">
    <property type="entry name" value="Peptidase_M24B_aminopep-P_CS"/>
</dbReference>
<dbReference type="InterPro" id="IPR052433">
    <property type="entry name" value="X-Pro_dipept-like"/>
</dbReference>
<dbReference type="InterPro" id="IPR022846">
    <property type="entry name" value="X_Pro_dipept"/>
</dbReference>
<dbReference type="NCBIfam" id="NF010133">
    <property type="entry name" value="PRK13607.1"/>
    <property type="match status" value="1"/>
</dbReference>
<dbReference type="PANTHER" id="PTHR43226">
    <property type="entry name" value="XAA-PRO AMINOPEPTIDASE 3"/>
    <property type="match status" value="1"/>
</dbReference>
<dbReference type="PANTHER" id="PTHR43226:SF8">
    <property type="entry name" value="XAA-PRO DIPEPTIDASE"/>
    <property type="match status" value="1"/>
</dbReference>
<dbReference type="Pfam" id="PF21216">
    <property type="entry name" value="PepQ_N"/>
    <property type="match status" value="1"/>
</dbReference>
<dbReference type="Pfam" id="PF00557">
    <property type="entry name" value="Peptidase_M24"/>
    <property type="match status" value="1"/>
</dbReference>
<dbReference type="SUPFAM" id="SSF55920">
    <property type="entry name" value="Creatinase/aminopeptidase"/>
    <property type="match status" value="1"/>
</dbReference>
<dbReference type="PROSITE" id="PS00491">
    <property type="entry name" value="PROLINE_PEPTIDASE"/>
    <property type="match status" value="1"/>
</dbReference>
<reference key="1">
    <citation type="journal article" date="2011" name="Appl. Environ. Microbiol.">
        <title>Genomic potential of Marinobacter aquaeolei, a biogeochemical 'opportunitroph'.</title>
        <authorList>
            <person name="Singer E."/>
            <person name="Webb E.A."/>
            <person name="Nelson W.C."/>
            <person name="Heidelberg J.F."/>
            <person name="Ivanova N."/>
            <person name="Pati A."/>
            <person name="Edwards K.J."/>
        </authorList>
    </citation>
    <scope>NUCLEOTIDE SEQUENCE [LARGE SCALE GENOMIC DNA]</scope>
    <source>
        <strain>ATCC 700491 / DSM 11845 / VT8</strain>
    </source>
</reference>
<gene>
    <name evidence="1" type="primary">pepQ</name>
    <name type="ordered locus">Maqu_0455</name>
</gene>
<feature type="chain" id="PRO_0000303849" description="Xaa-Pro dipeptidase">
    <location>
        <begin position="1"/>
        <end position="429"/>
    </location>
</feature>
<feature type="binding site" evidence="1">
    <location>
        <position position="241"/>
    </location>
    <ligand>
        <name>Mn(2+)</name>
        <dbReference type="ChEBI" id="CHEBI:29035"/>
        <label>2</label>
    </ligand>
</feature>
<feature type="binding site" evidence="1">
    <location>
        <position position="252"/>
    </location>
    <ligand>
        <name>Mn(2+)</name>
        <dbReference type="ChEBI" id="CHEBI:29035"/>
        <label>1</label>
    </ligand>
</feature>
<feature type="binding site" evidence="1">
    <location>
        <position position="252"/>
    </location>
    <ligand>
        <name>Mn(2+)</name>
        <dbReference type="ChEBI" id="CHEBI:29035"/>
        <label>2</label>
    </ligand>
</feature>
<feature type="binding site" evidence="1">
    <location>
        <position position="334"/>
    </location>
    <ligand>
        <name>Mn(2+)</name>
        <dbReference type="ChEBI" id="CHEBI:29035"/>
        <label>1</label>
    </ligand>
</feature>
<feature type="binding site" evidence="1">
    <location>
        <position position="372"/>
    </location>
    <ligand>
        <name>Mn(2+)</name>
        <dbReference type="ChEBI" id="CHEBI:29035"/>
        <label>1</label>
    </ligand>
</feature>
<feature type="binding site" evidence="1">
    <location>
        <position position="411"/>
    </location>
    <ligand>
        <name>Mn(2+)</name>
        <dbReference type="ChEBI" id="CHEBI:29035"/>
        <label>1</label>
    </ligand>
</feature>
<feature type="binding site" evidence="1">
    <location>
        <position position="411"/>
    </location>
    <ligand>
        <name>Mn(2+)</name>
        <dbReference type="ChEBI" id="CHEBI:29035"/>
        <label>2</label>
    </ligand>
</feature>
<protein>
    <recommendedName>
        <fullName evidence="1">Xaa-Pro dipeptidase</fullName>
        <shortName evidence="1">X-Pro dipeptidase</shortName>
        <ecNumber evidence="1">3.4.13.9</ecNumber>
    </recommendedName>
    <alternativeName>
        <fullName evidence="1">Imidodipeptidase</fullName>
    </alternativeName>
    <alternativeName>
        <fullName evidence="1">Proline dipeptidase</fullName>
        <shortName evidence="1">Prolidase</shortName>
    </alternativeName>
</protein>
<keyword id="KW-0224">Dipeptidase</keyword>
<keyword id="KW-0378">Hydrolase</keyword>
<keyword id="KW-0464">Manganese</keyword>
<keyword id="KW-0479">Metal-binding</keyword>
<keyword id="KW-0482">Metalloprotease</keyword>
<keyword id="KW-0645">Protease</keyword>
<evidence type="ECO:0000255" key="1">
    <source>
        <dbReference type="HAMAP-Rule" id="MF_01279"/>
    </source>
</evidence>